<accession>Q28HX0</accession>
<accession>B1H0Y5</accession>
<accession>Q28II5</accession>
<reference key="1">
    <citation type="submission" date="2006-10" db="EMBL/GenBank/DDBJ databases">
        <authorList>
            <consortium name="Sanger Xenopus tropicalis EST/cDNA project"/>
        </authorList>
    </citation>
    <scope>NUCLEOTIDE SEQUENCE [LARGE SCALE MRNA] (ISOFORMS 1 AND 2)</scope>
    <source>
        <tissue>Egg</tissue>
        <tissue>Neurula</tissue>
    </source>
</reference>
<reference key="2">
    <citation type="submission" date="2008-03" db="EMBL/GenBank/DDBJ databases">
        <authorList>
            <consortium name="NIH - Xenopus Gene Collection (XGC) project"/>
        </authorList>
    </citation>
    <scope>NUCLEOTIDE SEQUENCE [LARGE SCALE MRNA]</scope>
    <source>
        <tissue>Embryo</tissue>
    </source>
</reference>
<gene>
    <name evidence="1" type="primary">abraxas1</name>
    <name type="synonym">abra1</name>
    <name type="synonym">ccdc98</name>
    <name type="synonym">fam175a</name>
    <name type="ORF">TEgg007h13.1</name>
    <name type="ORF">TNeu015k14.1</name>
</gene>
<feature type="chain" id="PRO_0000278580" description="BRCA1-A complex subunit Abraxas 1">
    <location>
        <begin position="1"/>
        <end position="408"/>
    </location>
</feature>
<feature type="domain" description="MPN" evidence="3">
    <location>
        <begin position="7"/>
        <end position="155"/>
    </location>
</feature>
<feature type="region of interest" description="Disordered" evidence="4">
    <location>
        <begin position="360"/>
        <end position="408"/>
    </location>
</feature>
<feature type="coiled-coil region" evidence="2">
    <location>
        <begin position="210"/>
        <end position="273"/>
    </location>
</feature>
<feature type="short sequence motif" description="pSXXF motif" evidence="6">
    <location>
        <begin position="405"/>
        <end position="408"/>
    </location>
</feature>
<feature type="compositionally biased region" description="Polar residues" evidence="4">
    <location>
        <begin position="360"/>
        <end position="372"/>
    </location>
</feature>
<feature type="modified residue" description="Phosphoserine" evidence="1">
    <location>
        <position position="405"/>
    </location>
</feature>
<feature type="splice variant" id="VSP_037269" description="In isoform 2." evidence="5">
    <location>
        <begin position="1"/>
        <end position="49"/>
    </location>
</feature>
<evidence type="ECO:0000250" key="1">
    <source>
        <dbReference type="UniProtKB" id="Q6UWZ7"/>
    </source>
</evidence>
<evidence type="ECO:0000255" key="2"/>
<evidence type="ECO:0000255" key="3">
    <source>
        <dbReference type="PROSITE-ProRule" id="PRU01182"/>
    </source>
</evidence>
<evidence type="ECO:0000256" key="4">
    <source>
        <dbReference type="SAM" id="MobiDB-lite"/>
    </source>
</evidence>
<evidence type="ECO:0000303" key="5">
    <source ref="1"/>
</evidence>
<evidence type="ECO:0000305" key="6"/>
<dbReference type="EMBL" id="CR760374">
    <property type="protein sequence ID" value="CAJ82841.1"/>
    <property type="molecule type" value="mRNA"/>
</dbReference>
<dbReference type="EMBL" id="CR760699">
    <property type="protein sequence ID" value="CAJ83656.1"/>
    <property type="molecule type" value="mRNA"/>
</dbReference>
<dbReference type="EMBL" id="BC160397">
    <property type="protein sequence ID" value="AAI60397.1"/>
    <property type="molecule type" value="mRNA"/>
</dbReference>
<dbReference type="RefSeq" id="NP_001037959.1">
    <molecule id="Q28HX0-1"/>
    <property type="nucleotide sequence ID" value="NM_001044494.1"/>
</dbReference>
<dbReference type="RefSeq" id="XP_012819559.1">
    <molecule id="Q28HX0-1"/>
    <property type="nucleotide sequence ID" value="XM_012964105.3"/>
</dbReference>
<dbReference type="RefSeq" id="XP_012819566.1">
    <molecule id="Q28HX0-1"/>
    <property type="nucleotide sequence ID" value="XM_012964112.3"/>
</dbReference>
<dbReference type="RefSeq" id="XP_012819571.1">
    <molecule id="Q28HX0-1"/>
    <property type="nucleotide sequence ID" value="XM_012964117.3"/>
</dbReference>
<dbReference type="RefSeq" id="XP_012819575.1">
    <molecule id="Q28HX0-2"/>
    <property type="nucleotide sequence ID" value="XM_012964121.3"/>
</dbReference>
<dbReference type="RefSeq" id="XP_017949436.1">
    <property type="nucleotide sequence ID" value="XM_018093947.1"/>
</dbReference>
<dbReference type="RefSeq" id="XP_017949439.1">
    <property type="nucleotide sequence ID" value="XM_018093950.1"/>
</dbReference>
<dbReference type="SMR" id="Q28HX0"/>
<dbReference type="FunCoup" id="Q28HX0">
    <property type="interactions" value="2593"/>
</dbReference>
<dbReference type="STRING" id="8364.ENSXETP00000050668"/>
<dbReference type="PaxDb" id="8364-ENSXETP00000032477"/>
<dbReference type="GeneID" id="733722"/>
<dbReference type="KEGG" id="xtr:733722"/>
<dbReference type="AGR" id="Xenbase:XB-GENE-5730310"/>
<dbReference type="CTD" id="84142"/>
<dbReference type="Xenbase" id="XB-GENE-5730310">
    <property type="gene designation" value="abraxas1"/>
</dbReference>
<dbReference type="eggNOG" id="ENOG502QVCD">
    <property type="taxonomic scope" value="Eukaryota"/>
</dbReference>
<dbReference type="HOGENOM" id="CLU_056671_0_1_1"/>
<dbReference type="InParanoid" id="Q28HX0"/>
<dbReference type="OMA" id="MEYAAFI"/>
<dbReference type="OrthoDB" id="6358435at2759"/>
<dbReference type="Reactome" id="R-XTR-5689901">
    <property type="pathway name" value="Metalloprotease DUBs"/>
</dbReference>
<dbReference type="Proteomes" id="UP000008143">
    <property type="component" value="Chromosome 1"/>
</dbReference>
<dbReference type="Bgee" id="ENSXETG00000014838">
    <property type="expression patterns" value="Expressed in testis and 12 other cell types or tissues"/>
</dbReference>
<dbReference type="ExpressionAtlas" id="Q28HX0">
    <property type="expression patterns" value="baseline"/>
</dbReference>
<dbReference type="GO" id="GO:0070531">
    <property type="term" value="C:BRCA1-A complex"/>
    <property type="evidence" value="ECO:0000250"/>
    <property type="project" value="UniProtKB"/>
</dbReference>
<dbReference type="GO" id="GO:0005634">
    <property type="term" value="C:nucleus"/>
    <property type="evidence" value="ECO:0000250"/>
    <property type="project" value="UniProtKB"/>
</dbReference>
<dbReference type="GO" id="GO:0031593">
    <property type="term" value="F:polyubiquitin modification-dependent protein binding"/>
    <property type="evidence" value="ECO:0000250"/>
    <property type="project" value="UniProtKB"/>
</dbReference>
<dbReference type="GO" id="GO:0006325">
    <property type="term" value="P:chromatin organization"/>
    <property type="evidence" value="ECO:0007669"/>
    <property type="project" value="UniProtKB-KW"/>
</dbReference>
<dbReference type="GO" id="GO:0006302">
    <property type="term" value="P:double-strand break repair"/>
    <property type="evidence" value="ECO:0000250"/>
    <property type="project" value="UniProtKB"/>
</dbReference>
<dbReference type="GO" id="GO:0007095">
    <property type="term" value="P:mitotic G2 DNA damage checkpoint signaling"/>
    <property type="evidence" value="ECO:0000250"/>
    <property type="project" value="UniProtKB"/>
</dbReference>
<dbReference type="GO" id="GO:0045739">
    <property type="term" value="P:positive regulation of DNA repair"/>
    <property type="evidence" value="ECO:0000250"/>
    <property type="project" value="UniProtKB"/>
</dbReference>
<dbReference type="GO" id="GO:0010212">
    <property type="term" value="P:response to ionizing radiation"/>
    <property type="evidence" value="ECO:0000250"/>
    <property type="project" value="UniProtKB"/>
</dbReference>
<dbReference type="CDD" id="cd23523">
    <property type="entry name" value="Abraxas_1"/>
    <property type="match status" value="1"/>
</dbReference>
<dbReference type="InterPro" id="IPR023239">
    <property type="entry name" value="BRISC_Abraxas1"/>
</dbReference>
<dbReference type="InterPro" id="IPR023238">
    <property type="entry name" value="FAM175"/>
</dbReference>
<dbReference type="InterPro" id="IPR037518">
    <property type="entry name" value="MPN"/>
</dbReference>
<dbReference type="PANTHER" id="PTHR31728">
    <property type="entry name" value="ABRAXAS FAMILY MEMBER"/>
    <property type="match status" value="1"/>
</dbReference>
<dbReference type="PANTHER" id="PTHR31728:SF2">
    <property type="entry name" value="BRCA1-A COMPLEX SUBUNIT ABRAXAS 1"/>
    <property type="match status" value="1"/>
</dbReference>
<dbReference type="Pfam" id="PF21125">
    <property type="entry name" value="MPN_2A_DUB_like"/>
    <property type="match status" value="1"/>
</dbReference>
<dbReference type="PRINTS" id="PR02052">
    <property type="entry name" value="ABRAXAS"/>
</dbReference>
<dbReference type="PRINTS" id="PR02051">
    <property type="entry name" value="PROTEINF175"/>
</dbReference>
<dbReference type="PROSITE" id="PS50249">
    <property type="entry name" value="MPN"/>
    <property type="match status" value="1"/>
</dbReference>
<keyword id="KW-0025">Alternative splicing</keyword>
<keyword id="KW-0156">Chromatin regulator</keyword>
<keyword id="KW-0175">Coiled coil</keyword>
<keyword id="KW-0227">DNA damage</keyword>
<keyword id="KW-0234">DNA repair</keyword>
<keyword id="KW-0539">Nucleus</keyword>
<keyword id="KW-0597">Phosphoprotein</keyword>
<keyword id="KW-1185">Reference proteome</keyword>
<organism>
    <name type="scientific">Xenopus tropicalis</name>
    <name type="common">Western clawed frog</name>
    <name type="synonym">Silurana tropicalis</name>
    <dbReference type="NCBI Taxonomy" id="8364"/>
    <lineage>
        <taxon>Eukaryota</taxon>
        <taxon>Metazoa</taxon>
        <taxon>Chordata</taxon>
        <taxon>Craniata</taxon>
        <taxon>Vertebrata</taxon>
        <taxon>Euteleostomi</taxon>
        <taxon>Amphibia</taxon>
        <taxon>Batrachia</taxon>
        <taxon>Anura</taxon>
        <taxon>Pipoidea</taxon>
        <taxon>Pipidae</taxon>
        <taxon>Xenopodinae</taxon>
        <taxon>Xenopus</taxon>
        <taxon>Silurana</taxon>
    </lineage>
</organism>
<proteinExistence type="evidence at transcript level"/>
<protein>
    <recommendedName>
        <fullName evidence="1">BRCA1-A complex subunit Abraxas 1</fullName>
    </recommendedName>
    <alternativeName>
        <fullName>Coiled-coil domain-containing protein 98</fullName>
    </alternativeName>
    <alternativeName>
        <fullName>Protein FAM175A</fullName>
    </alternativeName>
</protein>
<comment type="function">
    <text evidence="1">Involved in DNA damage response and double-strand break (DSB) repair. Component of the BRCA1-A complex, acting as a central scaffold protein that assembles the various components of the complex and mediates the recruitment of brca1. The BRCA1-A complex specifically recognizes 'Lys-63'-linked ubiquitinated histones H2A and H2AX at DNA lesion sites, leading to target the brca1-bard1 heterodimer to sites of DNA damage at DSBs. This complex also possesses deubiquitinase activity that specifically removes 'Lys-63'-linked ubiquitin on histones H2A and H2AX (By similarity).</text>
</comment>
<comment type="subunit">
    <text evidence="1">Component of the BRCA1-A complex. Component of the BRISC complex. Interacts directly (when phosphorylated at Ser-405) with brca1. Homodimer. The phosphorylated homodimer can interact directly with two brca1 chains, giving rise to a heterotetramer (By similarity).</text>
</comment>
<comment type="subcellular location">
    <subcellularLocation>
        <location evidence="1">Nucleus</location>
    </subcellularLocation>
    <text evidence="1">Localizes at sites of DNA damage at double-strand breaks (DSBs).</text>
</comment>
<comment type="alternative products">
    <event type="alternative splicing"/>
    <isoform>
        <id>Q28HX0-1</id>
        <name>1</name>
        <sequence type="displayed"/>
    </isoform>
    <isoform>
        <id>Q28HX0-2</id>
        <name>2</name>
        <sequence type="described" ref="VSP_037269"/>
    </isoform>
</comment>
<comment type="PTM">
    <text evidence="1">Phosphorylation of Ser-405 of the pSXXF motif by ATM or ATR constitutes a specific recognition motif for the BRCT domain of BRCA1.</text>
</comment>
<comment type="similarity">
    <text evidence="6">Belongs to the FAM175 family. Abraxas subfamily.</text>
</comment>
<name>ABRX1_XENTR</name>
<sequence>MEGESTTAVMSGFVFGALTFHHLNSGSDTEGFLLGDVVGEAKNSITDSQMDDVEVLYTIDIQKHVPCYKLSRFYNVLGDLNIPELKKLLADQKKSQNVIGWYKFRHNTEQIMTFRERLLHKNLQEHLSNSGLVFLLLTSNPATETKSTHRLEYALHKPQDGFFHKVPLVISNLGMSDQQGYKTLCGSCVSVGLNTTIKKHRLEFFNEDGALAEVNRISNMYTTLQDELKKTCSQLVESEHSVEQLLEAINELKKQIAEKKKLNEETGNKVSEAPEENVLLCEALRKFFPQSTLLQSCRLSLGGRQIPHSCTASHNISDVNELTLMVKQYDIPEAHTRQAGKRKACSKQLGRTLTKKSRLLQLQKQHSQNGDSEGSDSERPLCNSGTETDGDILESLHMDVSRSKSPIF</sequence>